<reference key="1">
    <citation type="submission" date="2009-05" db="EMBL/GenBank/DDBJ databases">
        <title>DOE Joint Genome Institute Mimulus EST project.</title>
        <authorList>
            <person name="Lucas S."/>
            <person name="Rokhsar D."/>
            <person name="Wang M."/>
            <person name="Lindquist E.A."/>
            <person name="Bradshaw H.D. Jr."/>
            <person name="Case A.L."/>
            <person name="Willis J.H."/>
        </authorList>
    </citation>
    <scope>NUCLEOTIDE SEQUENCE [LARGE SCALE MRNA]</scope>
    <source>
        <strain>cv. IM62</strain>
        <tissue>Root</tissue>
    </source>
</reference>
<reference key="2">
    <citation type="journal article" date="2014" name="Plant Physiol.">
        <title>Functional and evolutionary analysis of the CASPARIAN STRIP MEMBRANE DOMAIN PROTEIN family.</title>
        <authorList>
            <person name="Roppolo D."/>
            <person name="Boeckmann B."/>
            <person name="Pfister A."/>
            <person name="Boutet E."/>
            <person name="Rubio M.C."/>
            <person name="Denervaud-Tendon V."/>
            <person name="Vermeer J.E."/>
            <person name="Gheyselinck J."/>
            <person name="Xenarios I."/>
            <person name="Geldner N."/>
        </authorList>
    </citation>
    <scope>GENE FAMILY</scope>
    <scope>NOMENCLATURE</scope>
</reference>
<proteinExistence type="evidence at transcript level"/>
<accession>P0DI53</accession>
<comment type="function">
    <text evidence="1">Regulates membrane-cell wall junctions and localized cell wall deposition. Required for establishment of the Casparian strip membrane domain (CSD) and the subsequent formation of Casparian strips, a cell wall modification of the root endodermis that determines an apoplastic barrier between the intraorganismal apoplasm and the extraorganismal apoplasm and prevents lateral diffusion (By similarity).</text>
</comment>
<comment type="subunit">
    <text evidence="1">Homodimer and heterodimers.</text>
</comment>
<comment type="subcellular location">
    <subcellularLocation>
        <location evidence="1">Cell membrane</location>
        <topology evidence="1">Multi-pass membrane protein</topology>
    </subcellularLocation>
    <text evidence="1">Very restricted localization following a belt shape within the plasma membrane which coincides with the position of the Casparian strip membrane domain in the root endodermis.</text>
</comment>
<comment type="similarity">
    <text evidence="3">Belongs to the Casparian strip membrane proteins (CASP) family.</text>
</comment>
<sequence length="207" mass="22137">MDSTKSTEETAINIPRESSSTKHKIAVAAVKAVATPHKRGGMKRGVAIFDFILRICALAAALAATATMGTTDQTLPFFTQFFQFQASYDDLPTFTFFVIANAIASGYLVLSLPFSIVAIVRPHVTGVKLLLLILDTVLVAFTTAAAASAAAIVYLAHNGNSNTNWFAICQQFNDFCQRTSGAVVASFIAAAIFIFLVVLSAVALRRH</sequence>
<protein>
    <recommendedName>
        <fullName>Casparian strip membrane protein 3</fullName>
        <shortName>MgCASP3</shortName>
    </recommendedName>
</protein>
<dbReference type="EMBL" id="GR042379">
    <property type="status" value="NOT_ANNOTATED_CDS"/>
    <property type="molecule type" value="mRNA"/>
</dbReference>
<dbReference type="RefSeq" id="NP_001412440.1">
    <property type="nucleotide sequence ID" value="NM_001425511.1"/>
</dbReference>
<dbReference type="RefSeq" id="XP_012838308.1">
    <property type="nucleotide sequence ID" value="XM_012982854.1"/>
</dbReference>
<dbReference type="SMR" id="P0DI53"/>
<dbReference type="GeneID" id="105958852"/>
<dbReference type="KEGG" id="egt:105958852"/>
<dbReference type="eggNOG" id="ENOG502QZV7">
    <property type="taxonomic scope" value="Eukaryota"/>
</dbReference>
<dbReference type="OMA" id="TSANWIA"/>
<dbReference type="OrthoDB" id="753675at2759"/>
<dbReference type="PhylomeDB" id="P0DI53"/>
<dbReference type="GO" id="GO:0005886">
    <property type="term" value="C:plasma membrane"/>
    <property type="evidence" value="ECO:0007669"/>
    <property type="project" value="UniProtKB-SubCell"/>
</dbReference>
<dbReference type="GO" id="GO:0071555">
    <property type="term" value="P:cell wall organization"/>
    <property type="evidence" value="ECO:0007669"/>
    <property type="project" value="UniProtKB-KW"/>
</dbReference>
<dbReference type="InterPro" id="IPR006459">
    <property type="entry name" value="CASP/CASPL"/>
</dbReference>
<dbReference type="InterPro" id="IPR006702">
    <property type="entry name" value="CASP_dom"/>
</dbReference>
<dbReference type="InterPro" id="IPR044173">
    <property type="entry name" value="CASPL"/>
</dbReference>
<dbReference type="NCBIfam" id="TIGR01569">
    <property type="entry name" value="A_tha_TIGR01569"/>
    <property type="match status" value="1"/>
</dbReference>
<dbReference type="PANTHER" id="PTHR36488:SF11">
    <property type="entry name" value="CASP-LIKE PROTEIN"/>
    <property type="match status" value="1"/>
</dbReference>
<dbReference type="PANTHER" id="PTHR36488">
    <property type="entry name" value="CASP-LIKE PROTEIN 1U1"/>
    <property type="match status" value="1"/>
</dbReference>
<dbReference type="Pfam" id="PF04535">
    <property type="entry name" value="CASP_dom"/>
    <property type="match status" value="1"/>
</dbReference>
<evidence type="ECO:0000250" key="1"/>
<evidence type="ECO:0000255" key="2"/>
<evidence type="ECO:0000305" key="3"/>
<name>CASP3_ERYGU</name>
<organism>
    <name type="scientific">Erythranthe guttata</name>
    <name type="common">Yellow monkey flower</name>
    <name type="synonym">Mimulus guttatus</name>
    <dbReference type="NCBI Taxonomy" id="4155"/>
    <lineage>
        <taxon>Eukaryota</taxon>
        <taxon>Viridiplantae</taxon>
        <taxon>Streptophyta</taxon>
        <taxon>Embryophyta</taxon>
        <taxon>Tracheophyta</taxon>
        <taxon>Spermatophyta</taxon>
        <taxon>Magnoliopsida</taxon>
        <taxon>eudicotyledons</taxon>
        <taxon>Gunneridae</taxon>
        <taxon>Pentapetalae</taxon>
        <taxon>asterids</taxon>
        <taxon>lamiids</taxon>
        <taxon>Lamiales</taxon>
        <taxon>Phrymaceae</taxon>
        <taxon>Erythranthe</taxon>
    </lineage>
</organism>
<feature type="chain" id="PRO_0000417787" description="Casparian strip membrane protein 3">
    <location>
        <begin position="1"/>
        <end position="207"/>
    </location>
</feature>
<feature type="topological domain" description="Cytoplasmic" evidence="2">
    <location>
        <begin position="1"/>
        <end position="45"/>
    </location>
</feature>
<feature type="transmembrane region" description="Helical" evidence="2">
    <location>
        <begin position="46"/>
        <end position="66"/>
    </location>
</feature>
<feature type="topological domain" description="Extracellular" evidence="2">
    <location>
        <begin position="67"/>
        <end position="95"/>
    </location>
</feature>
<feature type="transmembrane region" description="Helical" evidence="2">
    <location>
        <begin position="96"/>
        <end position="116"/>
    </location>
</feature>
<feature type="topological domain" description="Cytoplasmic" evidence="2">
    <location>
        <begin position="117"/>
        <end position="128"/>
    </location>
</feature>
<feature type="transmembrane region" description="Helical" evidence="2">
    <location>
        <begin position="129"/>
        <end position="149"/>
    </location>
</feature>
<feature type="topological domain" description="Extracellular" evidence="2">
    <location>
        <begin position="150"/>
        <end position="181"/>
    </location>
</feature>
<feature type="transmembrane region" description="Helical" evidence="2">
    <location>
        <begin position="182"/>
        <end position="202"/>
    </location>
</feature>
<feature type="topological domain" description="Cytoplasmic" evidence="2">
    <location>
        <begin position="203"/>
        <end position="207"/>
    </location>
</feature>
<keyword id="KW-1003">Cell membrane</keyword>
<keyword id="KW-0961">Cell wall biogenesis/degradation</keyword>
<keyword id="KW-0472">Membrane</keyword>
<keyword id="KW-0812">Transmembrane</keyword>
<keyword id="KW-1133">Transmembrane helix</keyword>